<reference key="1">
    <citation type="journal article" date="1990" name="Proc. Natl. Acad. Sci. U.S.A.">
        <title>Cell division in higher plants: a cdc2 gene, its 34-kDa product, and histone H1 kinase activity in pea.</title>
        <authorList>
            <person name="Feiler H.S."/>
            <person name="Jacobs T.W."/>
        </authorList>
    </citation>
    <scope>NUCLEOTIDE SEQUENCE [MRNA]</scope>
    <source>
        <strain>cv. Alaska</strain>
        <tissue>Shoot apex</tissue>
    </source>
</reference>
<sequence length="148" mass="17445">VVYKARDRVTNETIALKKIRLEQEDEGVPSTAIREISLLKEMQHRNIVRLQDVVHSEKRLYLVFEYLDLDLKKHMDSSPEFVKDPRQVKMFLYQMLCGIAYCHSHRVLHRDLKPQNLLIDRRTNCVKLADFGLARAFGIPVRTFTHEV</sequence>
<evidence type="ECO:0000250" key="1"/>
<evidence type="ECO:0000255" key="2">
    <source>
        <dbReference type="PROSITE-ProRule" id="PRU00159"/>
    </source>
</evidence>
<evidence type="ECO:0000255" key="3">
    <source>
        <dbReference type="PROSITE-ProRule" id="PRU10027"/>
    </source>
</evidence>
<evidence type="ECO:0000305" key="4"/>
<dbReference type="EC" id="2.7.11.22"/>
<dbReference type="EC" id="2.7.11.23"/>
<dbReference type="EMBL" id="X53035">
    <property type="protein sequence ID" value="CAA37207.1"/>
    <property type="molecule type" value="mRNA"/>
</dbReference>
<dbReference type="PIR" id="A35778">
    <property type="entry name" value="A33109"/>
</dbReference>
<dbReference type="SMR" id="P19026"/>
<dbReference type="GO" id="GO:0000307">
    <property type="term" value="C:cyclin-dependent protein kinase holoenzyme complex"/>
    <property type="evidence" value="ECO:0007669"/>
    <property type="project" value="TreeGrafter"/>
</dbReference>
<dbReference type="GO" id="GO:0005737">
    <property type="term" value="C:cytoplasm"/>
    <property type="evidence" value="ECO:0007669"/>
    <property type="project" value="TreeGrafter"/>
</dbReference>
<dbReference type="GO" id="GO:0005634">
    <property type="term" value="C:nucleus"/>
    <property type="evidence" value="ECO:0007669"/>
    <property type="project" value="TreeGrafter"/>
</dbReference>
<dbReference type="GO" id="GO:0005524">
    <property type="term" value="F:ATP binding"/>
    <property type="evidence" value="ECO:0007669"/>
    <property type="project" value="UniProtKB-KW"/>
</dbReference>
<dbReference type="GO" id="GO:0030332">
    <property type="term" value="F:cyclin binding"/>
    <property type="evidence" value="ECO:0007669"/>
    <property type="project" value="TreeGrafter"/>
</dbReference>
<dbReference type="GO" id="GO:0004693">
    <property type="term" value="F:cyclin-dependent protein serine/threonine kinase activity"/>
    <property type="evidence" value="ECO:0007669"/>
    <property type="project" value="UniProtKB-EC"/>
</dbReference>
<dbReference type="GO" id="GO:0106310">
    <property type="term" value="F:protein serine kinase activity"/>
    <property type="evidence" value="ECO:0007669"/>
    <property type="project" value="RHEA"/>
</dbReference>
<dbReference type="GO" id="GO:0008353">
    <property type="term" value="F:RNA polymerase II CTD heptapeptide repeat kinase activity"/>
    <property type="evidence" value="ECO:0007669"/>
    <property type="project" value="UniProtKB-EC"/>
</dbReference>
<dbReference type="GO" id="GO:0051301">
    <property type="term" value="P:cell division"/>
    <property type="evidence" value="ECO:0007669"/>
    <property type="project" value="UniProtKB-KW"/>
</dbReference>
<dbReference type="GO" id="GO:0000082">
    <property type="term" value="P:G1/S transition of mitotic cell cycle"/>
    <property type="evidence" value="ECO:0007669"/>
    <property type="project" value="TreeGrafter"/>
</dbReference>
<dbReference type="GO" id="GO:0010389">
    <property type="term" value="P:regulation of G2/M transition of mitotic cell cycle"/>
    <property type="evidence" value="ECO:0007669"/>
    <property type="project" value="TreeGrafter"/>
</dbReference>
<dbReference type="GO" id="GO:0051445">
    <property type="term" value="P:regulation of meiotic cell cycle"/>
    <property type="evidence" value="ECO:0007669"/>
    <property type="project" value="TreeGrafter"/>
</dbReference>
<dbReference type="GO" id="GO:0007165">
    <property type="term" value="P:signal transduction"/>
    <property type="evidence" value="ECO:0007669"/>
    <property type="project" value="TreeGrafter"/>
</dbReference>
<dbReference type="FunFam" id="3.30.200.20:FF:000927">
    <property type="entry name" value="Cyclin-dependent kinase 2"/>
    <property type="match status" value="1"/>
</dbReference>
<dbReference type="Gene3D" id="3.30.200.20">
    <property type="entry name" value="Phosphorylase Kinase, domain 1"/>
    <property type="match status" value="1"/>
</dbReference>
<dbReference type="Gene3D" id="1.10.510.10">
    <property type="entry name" value="Transferase(Phosphotransferase) domain 1"/>
    <property type="match status" value="1"/>
</dbReference>
<dbReference type="InterPro" id="IPR050108">
    <property type="entry name" value="CDK"/>
</dbReference>
<dbReference type="InterPro" id="IPR011009">
    <property type="entry name" value="Kinase-like_dom_sf"/>
</dbReference>
<dbReference type="InterPro" id="IPR000719">
    <property type="entry name" value="Prot_kinase_dom"/>
</dbReference>
<dbReference type="InterPro" id="IPR008271">
    <property type="entry name" value="Ser/Thr_kinase_AS"/>
</dbReference>
<dbReference type="PANTHER" id="PTHR24056">
    <property type="entry name" value="CELL DIVISION PROTEIN KINASE"/>
    <property type="match status" value="1"/>
</dbReference>
<dbReference type="PANTHER" id="PTHR24056:SF548">
    <property type="entry name" value="CYCLIN-DEPENDENT KINASE A-1"/>
    <property type="match status" value="1"/>
</dbReference>
<dbReference type="Pfam" id="PF00069">
    <property type="entry name" value="Pkinase"/>
    <property type="match status" value="1"/>
</dbReference>
<dbReference type="SMART" id="SM00220">
    <property type="entry name" value="S_TKc"/>
    <property type="match status" value="1"/>
</dbReference>
<dbReference type="SUPFAM" id="SSF56112">
    <property type="entry name" value="Protein kinase-like (PK-like)"/>
    <property type="match status" value="1"/>
</dbReference>
<dbReference type="PROSITE" id="PS50011">
    <property type="entry name" value="PROTEIN_KINASE_DOM"/>
    <property type="match status" value="1"/>
</dbReference>
<dbReference type="PROSITE" id="PS00108">
    <property type="entry name" value="PROTEIN_KINASE_ST"/>
    <property type="match status" value="1"/>
</dbReference>
<proteinExistence type="evidence at transcript level"/>
<keyword id="KW-0067">ATP-binding</keyword>
<keyword id="KW-0131">Cell cycle</keyword>
<keyword id="KW-0132">Cell division</keyword>
<keyword id="KW-0418">Kinase</keyword>
<keyword id="KW-0498">Mitosis</keyword>
<keyword id="KW-0547">Nucleotide-binding</keyword>
<keyword id="KW-0597">Phosphoprotein</keyword>
<keyword id="KW-0723">Serine/threonine-protein kinase</keyword>
<keyword id="KW-0808">Transferase</keyword>
<feature type="chain" id="PRO_0000085757" description="Cell division control protein 2 homolog 1">
    <location>
        <begin position="1" status="less than"/>
        <end position="148" status="greater than"/>
    </location>
</feature>
<feature type="domain" description="Protein kinase" evidence="2">
    <location>
        <begin position="1" status="less than"/>
        <end position="148" status="greater than"/>
    </location>
</feature>
<feature type="active site" description="Proton acceptor" evidence="2 3">
    <location>
        <position position="111"/>
    </location>
</feature>
<feature type="binding site" evidence="2">
    <location>
        <begin position="1" status="less than"/>
        <end position="2"/>
    </location>
    <ligand>
        <name>ATP</name>
        <dbReference type="ChEBI" id="CHEBI:30616"/>
    </ligand>
</feature>
<feature type="binding site" evidence="2">
    <location>
        <position position="17"/>
    </location>
    <ligand>
        <name>ATP</name>
        <dbReference type="ChEBI" id="CHEBI:30616"/>
    </ligand>
</feature>
<feature type="modified residue" description="Phosphothreonine; by CAK" evidence="1">
    <location>
        <position position="145"/>
    </location>
</feature>
<feature type="non-terminal residue">
    <location>
        <position position="1"/>
    </location>
</feature>
<feature type="non-terminal residue">
    <location>
        <position position="148"/>
    </location>
</feature>
<gene>
    <name type="primary">CDC2</name>
</gene>
<name>CDC21_PEA</name>
<protein>
    <recommendedName>
        <fullName>Cell division control protein 2 homolog 1</fullName>
        <ecNumber>2.7.11.22</ecNumber>
        <ecNumber>2.7.11.23</ecNumber>
    </recommendedName>
    <alternativeName>
        <fullName>p34</fullName>
    </alternativeName>
</protein>
<comment type="function">
    <text>Plays a key role in the control of the eukaryotic cell cycle. It is required in higher cells for entry into S-phase and mitosis. Component of the kinase complex that phosphorylates the repetitive C-terminus of RNA polymerase II.</text>
</comment>
<comment type="catalytic activity">
    <reaction>
        <text>L-seryl-[protein] + ATP = O-phospho-L-seryl-[protein] + ADP + H(+)</text>
        <dbReference type="Rhea" id="RHEA:17989"/>
        <dbReference type="Rhea" id="RHEA-COMP:9863"/>
        <dbReference type="Rhea" id="RHEA-COMP:11604"/>
        <dbReference type="ChEBI" id="CHEBI:15378"/>
        <dbReference type="ChEBI" id="CHEBI:29999"/>
        <dbReference type="ChEBI" id="CHEBI:30616"/>
        <dbReference type="ChEBI" id="CHEBI:83421"/>
        <dbReference type="ChEBI" id="CHEBI:456216"/>
        <dbReference type="EC" id="2.7.11.22"/>
    </reaction>
</comment>
<comment type="catalytic activity">
    <reaction>
        <text>L-threonyl-[protein] + ATP = O-phospho-L-threonyl-[protein] + ADP + H(+)</text>
        <dbReference type="Rhea" id="RHEA:46608"/>
        <dbReference type="Rhea" id="RHEA-COMP:11060"/>
        <dbReference type="Rhea" id="RHEA-COMP:11605"/>
        <dbReference type="ChEBI" id="CHEBI:15378"/>
        <dbReference type="ChEBI" id="CHEBI:30013"/>
        <dbReference type="ChEBI" id="CHEBI:30616"/>
        <dbReference type="ChEBI" id="CHEBI:61977"/>
        <dbReference type="ChEBI" id="CHEBI:456216"/>
        <dbReference type="EC" id="2.7.11.22"/>
    </reaction>
</comment>
<comment type="catalytic activity">
    <reaction>
        <text>[DNA-directed RNA polymerase] + ATP = phospho-[DNA-directed RNA polymerase] + ADP + H(+)</text>
        <dbReference type="Rhea" id="RHEA:10216"/>
        <dbReference type="Rhea" id="RHEA-COMP:11321"/>
        <dbReference type="Rhea" id="RHEA-COMP:11322"/>
        <dbReference type="ChEBI" id="CHEBI:15378"/>
        <dbReference type="ChEBI" id="CHEBI:30616"/>
        <dbReference type="ChEBI" id="CHEBI:43176"/>
        <dbReference type="ChEBI" id="CHEBI:68546"/>
        <dbReference type="ChEBI" id="CHEBI:456216"/>
        <dbReference type="EC" id="2.7.11.23"/>
    </reaction>
</comment>
<comment type="activity regulation">
    <text evidence="1">Phosphorylation inactivates the enzyme; while. Thr-145 phosphorylation is required for the catalytic activity of the enzyme (By similarity).</text>
</comment>
<comment type="similarity">
    <text evidence="4">Belongs to the protein kinase superfamily. CMGC Ser/Thr protein kinase family. CDC2/CDKX subfamily.</text>
</comment>
<accession>P19026</accession>
<organism>
    <name type="scientific">Pisum sativum</name>
    <name type="common">Garden pea</name>
    <name type="synonym">Lathyrus oleraceus</name>
    <dbReference type="NCBI Taxonomy" id="3888"/>
    <lineage>
        <taxon>Eukaryota</taxon>
        <taxon>Viridiplantae</taxon>
        <taxon>Streptophyta</taxon>
        <taxon>Embryophyta</taxon>
        <taxon>Tracheophyta</taxon>
        <taxon>Spermatophyta</taxon>
        <taxon>Magnoliopsida</taxon>
        <taxon>eudicotyledons</taxon>
        <taxon>Gunneridae</taxon>
        <taxon>Pentapetalae</taxon>
        <taxon>rosids</taxon>
        <taxon>fabids</taxon>
        <taxon>Fabales</taxon>
        <taxon>Fabaceae</taxon>
        <taxon>Papilionoideae</taxon>
        <taxon>50 kb inversion clade</taxon>
        <taxon>NPAAA clade</taxon>
        <taxon>Hologalegina</taxon>
        <taxon>IRL clade</taxon>
        <taxon>Fabeae</taxon>
        <taxon>Pisum</taxon>
    </lineage>
</organism>